<proteinExistence type="inferred from homology"/>
<sequence>MSIQVFCDFDGTITNNDNIMSIMEKFAPPEAEEVKNRILSQELSIQEGVSQLFQLIPTNLHDEIIQFLIETAEIRNGFHEFIQFVNENNISFYVISGGMDFFVYPLLQGLIPKEQIYCNETDFSNEYITVNWPHPCDRLCQNHCGLCKSSLIRKLSDTNDFHIVIGDSITDLQAAKQADKVFARDFLITKCEENHISYTPFETFHDVKTELKHLLEVKL</sequence>
<reference key="1">
    <citation type="submission" date="2008-10" db="EMBL/GenBank/DDBJ databases">
        <title>Genome sequence of Bacillus cereus AH820.</title>
        <authorList>
            <person name="Dodson R.J."/>
            <person name="Durkin A.S."/>
            <person name="Rosovitz M.J."/>
            <person name="Rasko D.A."/>
            <person name="Hoffmaster A."/>
            <person name="Ravel J."/>
            <person name="Sutton G."/>
        </authorList>
    </citation>
    <scope>NUCLEOTIDE SEQUENCE [LARGE SCALE GENOMIC DNA]</scope>
    <source>
        <strain>AH820</strain>
    </source>
</reference>
<name>MTNX_BACC0</name>
<keyword id="KW-0028">Amino-acid biosynthesis</keyword>
<keyword id="KW-0378">Hydrolase</keyword>
<keyword id="KW-0486">Methionine biosynthesis</keyword>
<comment type="function">
    <text evidence="1">Dephosphorylates 2-hydroxy-3-keto-5-methylthiopentenyl-1-phosphate (HK-MTPenyl-1-P) yielding 1,2-dihydroxy-3-keto-5-methylthiopentene (DHK-MTPene).</text>
</comment>
<comment type="catalytic activity">
    <reaction evidence="1">
        <text>2-hydroxy-5-methylsulfanyl-3-oxopent-1-enyl phosphate + H2O = 1,2-dihydroxy-5-(methylsulfanyl)pent-1-en-3-one + phosphate</text>
        <dbReference type="Rhea" id="RHEA:14481"/>
        <dbReference type="ChEBI" id="CHEBI:15377"/>
        <dbReference type="ChEBI" id="CHEBI:43474"/>
        <dbReference type="ChEBI" id="CHEBI:49252"/>
        <dbReference type="ChEBI" id="CHEBI:59505"/>
        <dbReference type="EC" id="3.1.3.87"/>
    </reaction>
</comment>
<comment type="pathway">
    <text evidence="1">Amino-acid biosynthesis; L-methionine biosynthesis via salvage pathway; L-methionine from S-methyl-5-thio-alpha-D-ribose 1-phosphate: step 4/6.</text>
</comment>
<comment type="similarity">
    <text evidence="1">Belongs to the HAD-like hydrolase superfamily. MtnX family.</text>
</comment>
<organism>
    <name type="scientific">Bacillus cereus (strain AH820)</name>
    <dbReference type="NCBI Taxonomy" id="405535"/>
    <lineage>
        <taxon>Bacteria</taxon>
        <taxon>Bacillati</taxon>
        <taxon>Bacillota</taxon>
        <taxon>Bacilli</taxon>
        <taxon>Bacillales</taxon>
        <taxon>Bacillaceae</taxon>
        <taxon>Bacillus</taxon>
        <taxon>Bacillus cereus group</taxon>
    </lineage>
</organism>
<gene>
    <name evidence="1" type="primary">mtnX</name>
    <name type="ordered locus">BCAH820_4058</name>
</gene>
<protein>
    <recommendedName>
        <fullName evidence="1">2-hydroxy-3-keto-5-methylthiopentenyl-1-phosphate phosphatase</fullName>
        <shortName evidence="1">HK-MTPenyl-1-P phosphatase</shortName>
        <ecNumber evidence="1">3.1.3.87</ecNumber>
    </recommendedName>
</protein>
<feature type="chain" id="PRO_1000187383" description="2-hydroxy-3-keto-5-methylthiopentenyl-1-phosphate phosphatase">
    <location>
        <begin position="1"/>
        <end position="219"/>
    </location>
</feature>
<accession>B7JL17</accession>
<dbReference type="EC" id="3.1.3.87" evidence="1"/>
<dbReference type="EMBL" id="CP001283">
    <property type="protein sequence ID" value="ACK91806.1"/>
    <property type="molecule type" value="Genomic_DNA"/>
</dbReference>
<dbReference type="RefSeq" id="WP_000027476.1">
    <property type="nucleotide sequence ID" value="NC_011773.1"/>
</dbReference>
<dbReference type="SMR" id="B7JL17"/>
<dbReference type="GeneID" id="45023927"/>
<dbReference type="KEGG" id="bcu:BCAH820_4058"/>
<dbReference type="HOGENOM" id="CLU_058495_2_1_9"/>
<dbReference type="UniPathway" id="UPA00904">
    <property type="reaction ID" value="UER00877"/>
</dbReference>
<dbReference type="Proteomes" id="UP000001363">
    <property type="component" value="Chromosome"/>
</dbReference>
<dbReference type="GO" id="GO:0043716">
    <property type="term" value="F:2-hydroxy-3-keto-5-methylthiopentenyl-1-phosphate phosphatase activity"/>
    <property type="evidence" value="ECO:0007669"/>
    <property type="project" value="UniProtKB-UniRule"/>
</dbReference>
<dbReference type="GO" id="GO:0019509">
    <property type="term" value="P:L-methionine salvage from methylthioadenosine"/>
    <property type="evidence" value="ECO:0007669"/>
    <property type="project" value="UniProtKB-UniRule"/>
</dbReference>
<dbReference type="CDD" id="cd07524">
    <property type="entry name" value="HAD_Pase"/>
    <property type="match status" value="1"/>
</dbReference>
<dbReference type="Gene3D" id="3.90.1470.20">
    <property type="match status" value="1"/>
</dbReference>
<dbReference type="Gene3D" id="3.40.50.1000">
    <property type="entry name" value="HAD superfamily/HAD-like"/>
    <property type="match status" value="1"/>
</dbReference>
<dbReference type="HAMAP" id="MF_01680">
    <property type="entry name" value="Salvage_MtnX"/>
    <property type="match status" value="1"/>
</dbReference>
<dbReference type="InterPro" id="IPR050849">
    <property type="entry name" value="HAD-like_hydrolase_phosphatase"/>
</dbReference>
<dbReference type="InterPro" id="IPR036412">
    <property type="entry name" value="HAD-like_sf"/>
</dbReference>
<dbReference type="InterPro" id="IPR017718">
    <property type="entry name" value="HAD-SF_hydro_IB_MtnX"/>
</dbReference>
<dbReference type="InterPro" id="IPR006384">
    <property type="entry name" value="HAD_hydro_PyrdxlP_Pase-like"/>
</dbReference>
<dbReference type="InterPro" id="IPR023214">
    <property type="entry name" value="HAD_sf"/>
</dbReference>
<dbReference type="NCBIfam" id="TIGR01489">
    <property type="entry name" value="DKMTPPase-SF"/>
    <property type="match status" value="1"/>
</dbReference>
<dbReference type="NCBIfam" id="TIGR01488">
    <property type="entry name" value="HAD-SF-IB"/>
    <property type="match status" value="1"/>
</dbReference>
<dbReference type="NCBIfam" id="NF007103">
    <property type="entry name" value="PRK09552.1"/>
    <property type="match status" value="1"/>
</dbReference>
<dbReference type="NCBIfam" id="TIGR03333">
    <property type="entry name" value="salvage_mtnX"/>
    <property type="match status" value="1"/>
</dbReference>
<dbReference type="PANTHER" id="PTHR28181:SF2">
    <property type="entry name" value="PHOSPHORIC MONOESTER HYDROLASE"/>
    <property type="match status" value="1"/>
</dbReference>
<dbReference type="PANTHER" id="PTHR28181">
    <property type="entry name" value="UPF0655 PROTEIN YCR015C"/>
    <property type="match status" value="1"/>
</dbReference>
<dbReference type="Pfam" id="PF12710">
    <property type="entry name" value="HAD"/>
    <property type="match status" value="1"/>
</dbReference>
<dbReference type="SUPFAM" id="SSF56784">
    <property type="entry name" value="HAD-like"/>
    <property type="match status" value="1"/>
</dbReference>
<evidence type="ECO:0000255" key="1">
    <source>
        <dbReference type="HAMAP-Rule" id="MF_01680"/>
    </source>
</evidence>